<protein>
    <recommendedName>
        <fullName>Dolichol-phosphate mannosyltransferase subunit 1</fullName>
        <ecNumber>2.4.1.83</ecNumber>
    </recommendedName>
    <alternativeName>
        <fullName>Dolichol-phosphate mannose synthase subunit 1</fullName>
        <shortName>DPM synthase subunit 1</shortName>
    </alternativeName>
    <alternativeName>
        <fullName>Dolichyl-phosphate beta-D-mannosyltransferase subunit 1</fullName>
    </alternativeName>
    <alternativeName>
        <fullName>Mannose-P-dolichol synthase subunit 1</fullName>
        <shortName>MPD synthase subunit 1</shortName>
    </alternativeName>
</protein>
<keyword id="KW-0007">Acetylation</keyword>
<keyword id="KW-0256">Endoplasmic reticulum</keyword>
<keyword id="KW-0328">Glycosyltransferase</keyword>
<keyword id="KW-0460">Magnesium</keyword>
<keyword id="KW-0464">Manganese</keyword>
<keyword id="KW-0479">Metal-binding</keyword>
<keyword id="KW-0597">Phosphoprotein</keyword>
<keyword id="KW-0808">Transferase</keyword>
<proteinExistence type="evidence at transcript level"/>
<reference key="1">
    <citation type="submission" date="1999-01" db="EMBL/GenBank/DDBJ databases">
        <title>Mutation in B4-2-1 CHO cells defective in MPD synthase activity.</title>
        <authorList>
            <person name="Pu L."/>
            <person name="Scocca J.R."/>
            <person name="Walker B.K."/>
            <person name="Wu J.S."/>
            <person name="Krag S.S."/>
        </authorList>
    </citation>
    <scope>NUCLEOTIDE SEQUENCE [MRNA]</scope>
</reference>
<feature type="initiator methionine" description="Removed" evidence="1">
    <location>
        <position position="1"/>
    </location>
</feature>
<feature type="chain" id="PRO_0000059169" description="Dolichol-phosphate mannosyltransferase subunit 1">
    <location>
        <begin position="2"/>
        <end position="266"/>
    </location>
</feature>
<feature type="region of interest" description="Disordered" evidence="3">
    <location>
        <begin position="1"/>
        <end position="31"/>
    </location>
</feature>
<feature type="compositionally biased region" description="Low complexity" evidence="3">
    <location>
        <begin position="1"/>
        <end position="19"/>
    </location>
</feature>
<feature type="binding site" evidence="2">
    <location>
        <position position="38"/>
    </location>
    <ligand>
        <name>GDP-alpha-D-mannose</name>
        <dbReference type="ChEBI" id="CHEBI:57527"/>
    </ligand>
</feature>
<feature type="binding site" evidence="2">
    <location>
        <position position="40"/>
    </location>
    <ligand>
        <name>GDP-alpha-D-mannose</name>
        <dbReference type="ChEBI" id="CHEBI:57527"/>
    </ligand>
</feature>
<feature type="binding site" evidence="2">
    <location>
        <position position="42"/>
    </location>
    <ligand>
        <name>GDP-alpha-D-mannose</name>
        <dbReference type="ChEBI" id="CHEBI:57527"/>
    </ligand>
</feature>
<feature type="binding site" evidence="2">
    <location>
        <position position="69"/>
    </location>
    <ligand>
        <name>GDP-alpha-D-mannose</name>
        <dbReference type="ChEBI" id="CHEBI:57527"/>
    </ligand>
</feature>
<feature type="binding site" evidence="2">
    <location>
        <position position="71"/>
    </location>
    <ligand>
        <name>GDP-alpha-D-mannose</name>
        <dbReference type="ChEBI" id="CHEBI:57527"/>
    </ligand>
</feature>
<feature type="binding site" evidence="2">
    <location>
        <position position="124"/>
    </location>
    <ligand>
        <name>GDP-alpha-D-mannose</name>
        <dbReference type="ChEBI" id="CHEBI:57527"/>
    </ligand>
</feature>
<feature type="binding site" evidence="2">
    <location>
        <position position="125"/>
    </location>
    <ligand>
        <name>GDP-alpha-D-mannose</name>
        <dbReference type="ChEBI" id="CHEBI:57527"/>
    </ligand>
</feature>
<feature type="binding site" evidence="2">
    <location>
        <position position="126"/>
    </location>
    <ligand>
        <name>GDP-alpha-D-mannose</name>
        <dbReference type="ChEBI" id="CHEBI:57527"/>
    </ligand>
</feature>
<feature type="binding site" evidence="2">
    <location>
        <position position="126"/>
    </location>
    <ligand>
        <name>Mg(2+)</name>
        <dbReference type="ChEBI" id="CHEBI:18420"/>
    </ligand>
</feature>
<feature type="binding site" evidence="2">
    <location>
        <position position="126"/>
    </location>
    <ligand>
        <name>Mn(2+)</name>
        <dbReference type="ChEBI" id="CHEBI:29035"/>
    </ligand>
</feature>
<feature type="binding site" evidence="2">
    <location>
        <position position="153"/>
    </location>
    <ligand>
        <name>GDP-alpha-D-mannose</name>
        <dbReference type="ChEBI" id="CHEBI:57527"/>
    </ligand>
</feature>
<feature type="binding site" evidence="2">
    <location>
        <position position="240"/>
    </location>
    <ligand>
        <name>GDP-alpha-D-mannose</name>
        <dbReference type="ChEBI" id="CHEBI:57527"/>
    </ligand>
</feature>
<feature type="binding site" evidence="2">
    <location>
        <position position="246"/>
    </location>
    <ligand>
        <name>GDP-alpha-D-mannose</name>
        <dbReference type="ChEBI" id="CHEBI:57527"/>
    </ligand>
</feature>
<feature type="modified residue" description="N-acetylalanine" evidence="1">
    <location>
        <position position="2"/>
    </location>
</feature>
<feature type="modified residue" description="Phosphoserine" evidence="1">
    <location>
        <position position="3"/>
    </location>
</feature>
<sequence length="266" mass="29654">MASPGASRGASAATAAAASPRPPQGRSSRRDKYSVLLPTYNERENLPLIVWLLVKSFSESSINYEIIIIDDGSPDGTREVAEQLEKIYGPDRILLRPREKKLGLGTAYIHGIKHATGNYVIIMDADLSHHPKFIPEFIRKQKEGNFDIVSGTRYKGNGGVYGWDLKRKIISRGANFITQILLRPGASDLTGSFRLYRKEVLQKLIEKCVSKGYVFQMEMIVRARQLNYTIGEVPISFVDRVYGESKLGGNEIVSFLKGLLTLFATT</sequence>
<evidence type="ECO:0000250" key="1">
    <source>
        <dbReference type="UniProtKB" id="O60762"/>
    </source>
</evidence>
<evidence type="ECO:0000250" key="2">
    <source>
        <dbReference type="UniProtKB" id="Q8U4M3"/>
    </source>
</evidence>
<evidence type="ECO:0000256" key="3">
    <source>
        <dbReference type="SAM" id="MobiDB-lite"/>
    </source>
</evidence>
<evidence type="ECO:0000305" key="4"/>
<organism>
    <name type="scientific">Cricetulus griseus</name>
    <name type="common">Chinese hamster</name>
    <name type="synonym">Cricetulus barabensis griseus</name>
    <dbReference type="NCBI Taxonomy" id="10029"/>
    <lineage>
        <taxon>Eukaryota</taxon>
        <taxon>Metazoa</taxon>
        <taxon>Chordata</taxon>
        <taxon>Craniata</taxon>
        <taxon>Vertebrata</taxon>
        <taxon>Euteleostomi</taxon>
        <taxon>Mammalia</taxon>
        <taxon>Eutheria</taxon>
        <taxon>Euarchontoglires</taxon>
        <taxon>Glires</taxon>
        <taxon>Rodentia</taxon>
        <taxon>Myomorpha</taxon>
        <taxon>Muroidea</taxon>
        <taxon>Cricetidae</taxon>
        <taxon>Cricetinae</taxon>
        <taxon>Cricetulus</taxon>
    </lineage>
</organism>
<accession>Q9WU83</accession>
<comment type="function">
    <text evidence="1">Transfers mannose from GDP-mannose to dolichol monophosphate to form dolichol phosphate mannose (Dol-P-Man) which is the mannosyl donor in pathways leading to N-glycosylation, glycosyl phosphatidylinositol membrane anchoring, and O-mannosylation of proteins; catalytic subunit of the dolichol-phosphate mannose (DPM) synthase complex.</text>
</comment>
<comment type="catalytic activity">
    <reaction evidence="1">
        <text>a di-trans,poly-cis-dolichyl phosphate + GDP-alpha-D-mannose = a di-trans,poly-cis-dolichyl beta-D-mannosyl phosphate + GDP</text>
        <dbReference type="Rhea" id="RHEA:21184"/>
        <dbReference type="Rhea" id="RHEA-COMP:19498"/>
        <dbReference type="Rhea" id="RHEA-COMP:19501"/>
        <dbReference type="ChEBI" id="CHEBI:57527"/>
        <dbReference type="ChEBI" id="CHEBI:57683"/>
        <dbReference type="ChEBI" id="CHEBI:58189"/>
        <dbReference type="ChEBI" id="CHEBI:58211"/>
        <dbReference type="EC" id="2.4.1.83"/>
    </reaction>
</comment>
<comment type="cofactor">
    <cofactor evidence="2">
        <name>Mg(2+)</name>
        <dbReference type="ChEBI" id="CHEBI:18420"/>
    </cofactor>
    <cofactor evidence="2">
        <name>Mn(2+)</name>
        <dbReference type="ChEBI" id="CHEBI:29035"/>
    </cofactor>
    <cofactor evidence="2">
        <name>Ca(2+)</name>
        <dbReference type="ChEBI" id="CHEBI:29108"/>
    </cofactor>
    <text evidence="2">Binds 1 divalent metal cation.</text>
</comment>
<comment type="pathway">
    <text evidence="1">Protein modification; protein glycosylation.</text>
</comment>
<comment type="subunit">
    <text evidence="1">Component of the dolichol-phosphate mannose (DPM) synthase complex composed of DPM1, DPM2 and DPM3; within the complex, directly interacts with DPM3. This interaction may stabilize DPM1.</text>
</comment>
<comment type="subcellular location">
    <subcellularLocation>
        <location evidence="1">Endoplasmic reticulum</location>
    </subcellularLocation>
</comment>
<comment type="similarity">
    <text evidence="4">Belongs to the glycosyltransferase 2 family.</text>
</comment>
<dbReference type="EC" id="2.4.1.83"/>
<dbReference type="EMBL" id="AF121895">
    <property type="protein sequence ID" value="AAD30975.1"/>
    <property type="molecule type" value="mRNA"/>
</dbReference>
<dbReference type="RefSeq" id="NP_001233614.1">
    <property type="nucleotide sequence ID" value="NM_001246685.1"/>
</dbReference>
<dbReference type="SMR" id="Q9WU83"/>
<dbReference type="CAZy" id="GT2">
    <property type="family name" value="Glycosyltransferase Family 2"/>
</dbReference>
<dbReference type="PaxDb" id="10029-NP_001233614.1"/>
<dbReference type="GeneID" id="100689420"/>
<dbReference type="KEGG" id="cge:100689420"/>
<dbReference type="CTD" id="8813"/>
<dbReference type="eggNOG" id="KOG2978">
    <property type="taxonomic scope" value="Eukaryota"/>
</dbReference>
<dbReference type="OrthoDB" id="2603at2759"/>
<dbReference type="UniPathway" id="UPA00378"/>
<dbReference type="Proteomes" id="UP000694386">
    <property type="component" value="Unplaced"/>
</dbReference>
<dbReference type="Proteomes" id="UP001108280">
    <property type="component" value="Chromosome 6"/>
</dbReference>
<dbReference type="GO" id="GO:0005789">
    <property type="term" value="C:endoplasmic reticulum membrane"/>
    <property type="evidence" value="ECO:0007669"/>
    <property type="project" value="TreeGrafter"/>
</dbReference>
<dbReference type="GO" id="GO:0004582">
    <property type="term" value="F:dolichyl-phosphate beta-D-mannosyltransferase activity"/>
    <property type="evidence" value="ECO:0000250"/>
    <property type="project" value="UniProtKB"/>
</dbReference>
<dbReference type="GO" id="GO:0046872">
    <property type="term" value="F:metal ion binding"/>
    <property type="evidence" value="ECO:0000250"/>
    <property type="project" value="UniProtKB"/>
</dbReference>
<dbReference type="GO" id="GO:0180047">
    <property type="term" value="P:dolichol phosphate mannose biosynthetic process"/>
    <property type="evidence" value="ECO:0000250"/>
    <property type="project" value="UniProtKB"/>
</dbReference>
<dbReference type="GO" id="GO:0006488">
    <property type="term" value="P:dolichol-linked oligosaccharide biosynthetic process"/>
    <property type="evidence" value="ECO:0007669"/>
    <property type="project" value="TreeGrafter"/>
</dbReference>
<dbReference type="GO" id="GO:0006506">
    <property type="term" value="P:GPI anchor biosynthetic process"/>
    <property type="evidence" value="ECO:0007669"/>
    <property type="project" value="TreeGrafter"/>
</dbReference>
<dbReference type="GO" id="GO:0035269">
    <property type="term" value="P:protein O-linked mannosylation"/>
    <property type="evidence" value="ECO:0000250"/>
    <property type="project" value="UniProtKB"/>
</dbReference>
<dbReference type="CDD" id="cd06442">
    <property type="entry name" value="DPM1_like"/>
    <property type="match status" value="1"/>
</dbReference>
<dbReference type="FunFam" id="3.90.550.10:FF:000036">
    <property type="entry name" value="Dolichol-phosphate mannosyltransferase subunit 1"/>
    <property type="match status" value="1"/>
</dbReference>
<dbReference type="Gene3D" id="3.90.550.10">
    <property type="entry name" value="Spore Coat Polysaccharide Biosynthesis Protein SpsA, Chain A"/>
    <property type="match status" value="1"/>
</dbReference>
<dbReference type="InterPro" id="IPR039528">
    <property type="entry name" value="DPM1-like"/>
</dbReference>
<dbReference type="InterPro" id="IPR001173">
    <property type="entry name" value="Glyco_trans_2-like"/>
</dbReference>
<dbReference type="InterPro" id="IPR029044">
    <property type="entry name" value="Nucleotide-diphossugar_trans"/>
</dbReference>
<dbReference type="PANTHER" id="PTHR43398">
    <property type="entry name" value="DOLICHOL-PHOSPHATE MANNOSYLTRANSFERASE SUBUNIT 1"/>
    <property type="match status" value="1"/>
</dbReference>
<dbReference type="PANTHER" id="PTHR43398:SF1">
    <property type="entry name" value="DOLICHOL-PHOSPHATE MANNOSYLTRANSFERASE SUBUNIT 1"/>
    <property type="match status" value="1"/>
</dbReference>
<dbReference type="Pfam" id="PF00535">
    <property type="entry name" value="Glycos_transf_2"/>
    <property type="match status" value="1"/>
</dbReference>
<dbReference type="SUPFAM" id="SSF53448">
    <property type="entry name" value="Nucleotide-diphospho-sugar transferases"/>
    <property type="match status" value="1"/>
</dbReference>
<gene>
    <name type="primary">DPM1</name>
</gene>
<name>DPM1_CRIGR</name>